<dbReference type="EMBL" id="AK005267">
    <property type="protein sequence ID" value="BAB23919.1"/>
    <property type="molecule type" value="mRNA"/>
</dbReference>
<dbReference type="EMBL" id="BC012230">
    <property type="protein sequence ID" value="AAH12230.1"/>
    <property type="molecule type" value="mRNA"/>
</dbReference>
<dbReference type="CCDS" id="CCDS20824.1"/>
<dbReference type="RefSeq" id="NP_001347659.1">
    <property type="nucleotide sequence ID" value="NM_001360730.1"/>
</dbReference>
<dbReference type="RefSeq" id="NP_081161.1">
    <property type="nucleotide sequence ID" value="NM_026885.3"/>
</dbReference>
<dbReference type="RefSeq" id="XP_006540408.1">
    <property type="nucleotide sequence ID" value="XM_006540345.3"/>
</dbReference>
<dbReference type="SMR" id="Q9DB34"/>
<dbReference type="BioGRID" id="213137">
    <property type="interactions" value="23"/>
</dbReference>
<dbReference type="ComplexPortal" id="CPX-332">
    <property type="entry name" value="ESCRT-III complex, variant Chmp1b1"/>
</dbReference>
<dbReference type="ComplexPortal" id="CPX-333">
    <property type="entry name" value="ESCRT-III complex, variant Chmp1b2"/>
</dbReference>
<dbReference type="FunCoup" id="Q9DB34">
    <property type="interactions" value="3168"/>
</dbReference>
<dbReference type="IntAct" id="Q9DB34">
    <property type="interactions" value="10"/>
</dbReference>
<dbReference type="MINT" id="Q9DB34"/>
<dbReference type="STRING" id="10090.ENSMUSP00000005711"/>
<dbReference type="iPTMnet" id="Q9DB34"/>
<dbReference type="PhosphoSitePlus" id="Q9DB34"/>
<dbReference type="jPOST" id="Q9DB34"/>
<dbReference type="PaxDb" id="10090-ENSMUSP00000005711"/>
<dbReference type="PeptideAtlas" id="Q9DB34"/>
<dbReference type="ProteomicsDB" id="281214"/>
<dbReference type="Pumba" id="Q9DB34"/>
<dbReference type="Antibodypedia" id="33353">
    <property type="antibodies" value="167 antibodies from 24 providers"/>
</dbReference>
<dbReference type="DNASU" id="68953"/>
<dbReference type="Ensembl" id="ENSMUST00000005711.6">
    <property type="protein sequence ID" value="ENSMUSP00000005711.5"/>
    <property type="gene ID" value="ENSMUSG00000033916.6"/>
</dbReference>
<dbReference type="Ensembl" id="ENSMUST00000210587.2">
    <property type="protein sequence ID" value="ENSMUSP00000148218.2"/>
    <property type="gene ID" value="ENSMUSG00000033916.6"/>
</dbReference>
<dbReference type="GeneID" id="68953"/>
<dbReference type="KEGG" id="mmu:68953"/>
<dbReference type="UCSC" id="uc009ffc.2">
    <property type="organism name" value="mouse"/>
</dbReference>
<dbReference type="AGR" id="MGI:1916203"/>
<dbReference type="CTD" id="27243"/>
<dbReference type="MGI" id="MGI:1916203">
    <property type="gene designation" value="Chmp2a"/>
</dbReference>
<dbReference type="VEuPathDB" id="HostDB:ENSMUSG00000033916"/>
<dbReference type="eggNOG" id="KOG3230">
    <property type="taxonomic scope" value="Eukaryota"/>
</dbReference>
<dbReference type="GeneTree" id="ENSGT00950000182832"/>
<dbReference type="HOGENOM" id="CLU_069208_1_0_1"/>
<dbReference type="InParanoid" id="Q9DB34"/>
<dbReference type="OMA" id="KMAKMNQ"/>
<dbReference type="OrthoDB" id="10252926at2759"/>
<dbReference type="PhylomeDB" id="Q9DB34"/>
<dbReference type="TreeFam" id="TF300118"/>
<dbReference type="Reactome" id="R-MMU-1632852">
    <property type="pathway name" value="Macroautophagy"/>
</dbReference>
<dbReference type="Reactome" id="R-MMU-432720">
    <property type="pathway name" value="Lysosome Vesicle Biogenesis"/>
</dbReference>
<dbReference type="Reactome" id="R-MMU-5620971">
    <property type="pathway name" value="Pyroptosis"/>
</dbReference>
<dbReference type="Reactome" id="R-MMU-917729">
    <property type="pathway name" value="Endosomal Sorting Complex Required For Transport (ESCRT)"/>
</dbReference>
<dbReference type="Reactome" id="R-MMU-9668328">
    <property type="pathway name" value="Sealing of the nuclear envelope (NE) by ESCRT-III"/>
</dbReference>
<dbReference type="BioGRID-ORCS" id="68953">
    <property type="hits" value="22 hits in 79 CRISPR screens"/>
</dbReference>
<dbReference type="CD-CODE" id="CE726F99">
    <property type="entry name" value="Postsynaptic density"/>
</dbReference>
<dbReference type="ChiTaRS" id="Chmp2a">
    <property type="organism name" value="mouse"/>
</dbReference>
<dbReference type="PRO" id="PR:Q9DB34"/>
<dbReference type="Proteomes" id="UP000000589">
    <property type="component" value="Chromosome 7"/>
</dbReference>
<dbReference type="RNAct" id="Q9DB34">
    <property type="molecule type" value="protein"/>
</dbReference>
<dbReference type="Bgee" id="ENSMUSG00000033916">
    <property type="expression patterns" value="Expressed in substantia propria of cornea and 272 other cell types or tissues"/>
</dbReference>
<dbReference type="ExpressionAtlas" id="Q9DB34">
    <property type="expression patterns" value="baseline and differential"/>
</dbReference>
<dbReference type="GO" id="GO:1904930">
    <property type="term" value="C:amphisome membrane"/>
    <property type="evidence" value="ECO:0000266"/>
    <property type="project" value="ComplexPortal"/>
</dbReference>
<dbReference type="GO" id="GO:0000421">
    <property type="term" value="C:autophagosome membrane"/>
    <property type="evidence" value="ECO:0000266"/>
    <property type="project" value="ComplexPortal"/>
</dbReference>
<dbReference type="GO" id="GO:0000785">
    <property type="term" value="C:chromatin"/>
    <property type="evidence" value="ECO:0007669"/>
    <property type="project" value="Ensembl"/>
</dbReference>
<dbReference type="GO" id="GO:0005829">
    <property type="term" value="C:cytosol"/>
    <property type="evidence" value="ECO:0000314"/>
    <property type="project" value="MGI"/>
</dbReference>
<dbReference type="GO" id="GO:0000815">
    <property type="term" value="C:ESCRT III complex"/>
    <property type="evidence" value="ECO:0007669"/>
    <property type="project" value="Ensembl"/>
</dbReference>
<dbReference type="GO" id="GO:0000776">
    <property type="term" value="C:kinetochore"/>
    <property type="evidence" value="ECO:0000266"/>
    <property type="project" value="ComplexPortal"/>
</dbReference>
<dbReference type="GO" id="GO:0005828">
    <property type="term" value="C:kinetochore microtubule"/>
    <property type="evidence" value="ECO:0000266"/>
    <property type="project" value="ComplexPortal"/>
</dbReference>
<dbReference type="GO" id="GO:0005765">
    <property type="term" value="C:lysosomal membrane"/>
    <property type="evidence" value="ECO:0000266"/>
    <property type="project" value="ComplexPortal"/>
</dbReference>
<dbReference type="GO" id="GO:0030117">
    <property type="term" value="C:membrane coat"/>
    <property type="evidence" value="ECO:0007669"/>
    <property type="project" value="Ensembl"/>
</dbReference>
<dbReference type="GO" id="GO:0030496">
    <property type="term" value="C:midbody"/>
    <property type="evidence" value="ECO:0000266"/>
    <property type="project" value="ComplexPortal"/>
</dbReference>
<dbReference type="GO" id="GO:0032585">
    <property type="term" value="C:multivesicular body membrane"/>
    <property type="evidence" value="ECO:0000266"/>
    <property type="project" value="ComplexPortal"/>
</dbReference>
<dbReference type="GO" id="GO:0005635">
    <property type="term" value="C:nuclear envelope"/>
    <property type="evidence" value="ECO:0000250"/>
    <property type="project" value="UniProtKB"/>
</dbReference>
<dbReference type="GO" id="GO:0005643">
    <property type="term" value="C:nuclear pore"/>
    <property type="evidence" value="ECO:0000266"/>
    <property type="project" value="ComplexPortal"/>
</dbReference>
<dbReference type="GO" id="GO:0005886">
    <property type="term" value="C:plasma membrane"/>
    <property type="evidence" value="ECO:0000266"/>
    <property type="project" value="ComplexPortal"/>
</dbReference>
<dbReference type="GO" id="GO:0031210">
    <property type="term" value="F:phosphatidylcholine binding"/>
    <property type="evidence" value="ECO:0007669"/>
    <property type="project" value="Ensembl"/>
</dbReference>
<dbReference type="GO" id="GO:0019904">
    <property type="term" value="F:protein domain specific binding"/>
    <property type="evidence" value="ECO:0007669"/>
    <property type="project" value="Ensembl"/>
</dbReference>
<dbReference type="GO" id="GO:0097352">
    <property type="term" value="P:autophagosome maturation"/>
    <property type="evidence" value="ECO:0000266"/>
    <property type="project" value="ComplexPortal"/>
</dbReference>
<dbReference type="GO" id="GO:0006914">
    <property type="term" value="P:autophagy"/>
    <property type="evidence" value="ECO:0000266"/>
    <property type="project" value="ComplexPortal"/>
</dbReference>
<dbReference type="GO" id="GO:0010458">
    <property type="term" value="P:exit from mitosis"/>
    <property type="evidence" value="ECO:0000250"/>
    <property type="project" value="UniProtKB"/>
</dbReference>
<dbReference type="GO" id="GO:1902774">
    <property type="term" value="P:late endosome to lysosome transport"/>
    <property type="evidence" value="ECO:0000266"/>
    <property type="project" value="ComplexPortal"/>
</dbReference>
<dbReference type="GO" id="GO:0090148">
    <property type="term" value="P:membrane fission"/>
    <property type="evidence" value="ECO:0000303"/>
    <property type="project" value="ComplexPortal"/>
</dbReference>
<dbReference type="GO" id="GO:0010324">
    <property type="term" value="P:membrane invagination"/>
    <property type="evidence" value="ECO:0007669"/>
    <property type="project" value="Ensembl"/>
</dbReference>
<dbReference type="GO" id="GO:0061952">
    <property type="term" value="P:midbody abscission"/>
    <property type="evidence" value="ECO:0000266"/>
    <property type="project" value="ComplexPortal"/>
</dbReference>
<dbReference type="GO" id="GO:0007080">
    <property type="term" value="P:mitotic metaphase chromosome alignment"/>
    <property type="evidence" value="ECO:0000266"/>
    <property type="project" value="ComplexPortal"/>
</dbReference>
<dbReference type="GO" id="GO:0036258">
    <property type="term" value="P:multivesicular body assembly"/>
    <property type="evidence" value="ECO:0000303"/>
    <property type="project" value="ComplexPortal"/>
</dbReference>
<dbReference type="GO" id="GO:0071985">
    <property type="term" value="P:multivesicular body sorting pathway"/>
    <property type="evidence" value="ECO:0000266"/>
    <property type="project" value="ComplexPortal"/>
</dbReference>
<dbReference type="GO" id="GO:0061763">
    <property type="term" value="P:multivesicular body-lysosome fusion"/>
    <property type="evidence" value="ECO:0000303"/>
    <property type="project" value="ComplexPortal"/>
</dbReference>
<dbReference type="GO" id="GO:1903723">
    <property type="term" value="P:negative regulation of centriole elongation"/>
    <property type="evidence" value="ECO:0007669"/>
    <property type="project" value="Ensembl"/>
</dbReference>
<dbReference type="GO" id="GO:0031468">
    <property type="term" value="P:nuclear membrane reassembly"/>
    <property type="evidence" value="ECO:0000250"/>
    <property type="project" value="UniProtKB"/>
</dbReference>
<dbReference type="GO" id="GO:0006997">
    <property type="term" value="P:nucleus organization"/>
    <property type="evidence" value="ECO:0000266"/>
    <property type="project" value="ComplexPortal"/>
</dbReference>
<dbReference type="GO" id="GO:0001778">
    <property type="term" value="P:plasma membrane repair"/>
    <property type="evidence" value="ECO:0000266"/>
    <property type="project" value="ComplexPortal"/>
</dbReference>
<dbReference type="GO" id="GO:1903543">
    <property type="term" value="P:positive regulation of exosomal secretion"/>
    <property type="evidence" value="ECO:0007669"/>
    <property type="project" value="Ensembl"/>
</dbReference>
<dbReference type="GO" id="GO:0051260">
    <property type="term" value="P:protein homooligomerization"/>
    <property type="evidence" value="ECO:0007669"/>
    <property type="project" value="Ensembl"/>
</dbReference>
<dbReference type="GO" id="GO:0051258">
    <property type="term" value="P:protein polymerization"/>
    <property type="evidence" value="ECO:0007669"/>
    <property type="project" value="Ensembl"/>
</dbReference>
<dbReference type="GO" id="GO:0015031">
    <property type="term" value="P:protein transport"/>
    <property type="evidence" value="ECO:0007669"/>
    <property type="project" value="UniProtKB-KW"/>
</dbReference>
<dbReference type="GO" id="GO:0010824">
    <property type="term" value="P:regulation of centrosome duplication"/>
    <property type="evidence" value="ECO:0007669"/>
    <property type="project" value="Ensembl"/>
</dbReference>
<dbReference type="GO" id="GO:1901673">
    <property type="term" value="P:regulation of mitotic spindle assembly"/>
    <property type="evidence" value="ECO:0000266"/>
    <property type="project" value="ComplexPortal"/>
</dbReference>
<dbReference type="GO" id="GO:0043162">
    <property type="term" value="P:ubiquitin-dependent protein catabolic process via the multivesicular body sorting pathway"/>
    <property type="evidence" value="ECO:0000266"/>
    <property type="project" value="ComplexPortal"/>
</dbReference>
<dbReference type="GO" id="GO:0051469">
    <property type="term" value="P:vesicle fusion with vacuole"/>
    <property type="evidence" value="ECO:0000303"/>
    <property type="project" value="ComplexPortal"/>
</dbReference>
<dbReference type="GO" id="GO:0046761">
    <property type="term" value="P:viral budding from plasma membrane"/>
    <property type="evidence" value="ECO:0000266"/>
    <property type="project" value="ComplexPortal"/>
</dbReference>
<dbReference type="GO" id="GO:0039702">
    <property type="term" value="P:viral budding via host ESCRT complex"/>
    <property type="evidence" value="ECO:0000266"/>
    <property type="project" value="ComplexPortal"/>
</dbReference>
<dbReference type="Gene3D" id="6.10.140.1230">
    <property type="match status" value="1"/>
</dbReference>
<dbReference type="InterPro" id="IPR005024">
    <property type="entry name" value="Snf7_fam"/>
</dbReference>
<dbReference type="PANTHER" id="PTHR10476">
    <property type="entry name" value="CHARGED MULTIVESICULAR BODY PROTEIN"/>
    <property type="match status" value="1"/>
</dbReference>
<dbReference type="Pfam" id="PF03357">
    <property type="entry name" value="Snf7"/>
    <property type="match status" value="1"/>
</dbReference>
<accession>Q9DB34</accession>
<evidence type="ECO:0000250" key="1"/>
<evidence type="ECO:0000250" key="2">
    <source>
        <dbReference type="UniProtKB" id="O43633"/>
    </source>
</evidence>
<evidence type="ECO:0000255" key="3"/>
<evidence type="ECO:0000256" key="4">
    <source>
        <dbReference type="SAM" id="MobiDB-lite"/>
    </source>
</evidence>
<evidence type="ECO:0000269" key="5">
    <source>
    </source>
</evidence>
<evidence type="ECO:0000305" key="6"/>
<keyword id="KW-0007">Acetylation</keyword>
<keyword id="KW-0175">Coiled coil</keyword>
<keyword id="KW-0963">Cytoplasm</keyword>
<keyword id="KW-0967">Endosome</keyword>
<keyword id="KW-0472">Membrane</keyword>
<keyword id="KW-0539">Nucleus</keyword>
<keyword id="KW-0597">Phosphoprotein</keyword>
<keyword id="KW-0653">Protein transport</keyword>
<keyword id="KW-1185">Reference proteome</keyword>
<keyword id="KW-0813">Transport</keyword>
<keyword id="KW-0832">Ubl conjugation</keyword>
<sequence length="222" mass="25134">MDLLFGRRKTPEELLRQNQRALNRAMRELDRERQKLETQEKKIIADIKKMAKQGQMDAVRIMAKDLVRTRRYVRKFVLMRANIQAVSLKIQTLKSNNSMAQAMKGVTKAMGTMNRQLKLPQIQKIMMEFERQAEIMDMKEEMMNDAIDDAMGDEEDEEESDAVVSQVLDELGLSLTDELSNLPSTGGSLSVAAGGKKAEATASALADADADLEERLKNLRRD</sequence>
<name>CHM2A_MOUSE</name>
<organism>
    <name type="scientific">Mus musculus</name>
    <name type="common">Mouse</name>
    <dbReference type="NCBI Taxonomy" id="10090"/>
    <lineage>
        <taxon>Eukaryota</taxon>
        <taxon>Metazoa</taxon>
        <taxon>Chordata</taxon>
        <taxon>Craniata</taxon>
        <taxon>Vertebrata</taxon>
        <taxon>Euteleostomi</taxon>
        <taxon>Mammalia</taxon>
        <taxon>Eutheria</taxon>
        <taxon>Euarchontoglires</taxon>
        <taxon>Glires</taxon>
        <taxon>Rodentia</taxon>
        <taxon>Myomorpha</taxon>
        <taxon>Muroidea</taxon>
        <taxon>Muridae</taxon>
        <taxon>Murinae</taxon>
        <taxon>Mus</taxon>
        <taxon>Mus</taxon>
    </lineage>
</organism>
<gene>
    <name type="primary">Chmp2a</name>
</gene>
<protein>
    <recommendedName>
        <fullName>Charged multivesicular body protein 2a</fullName>
    </recommendedName>
    <alternativeName>
        <fullName>Chromatin-modifying protein 2a</fullName>
        <shortName>CHMP2a</shortName>
    </alternativeName>
    <alternativeName>
        <fullName>Vacuolar protein sorting-associated protein 2</fullName>
        <shortName>mVps2</shortName>
    </alternativeName>
</protein>
<comment type="function">
    <text evidence="2">Probable core component of the endosomal sorting required for transport complex III (ESCRT-III) which is involved in multivesicular bodies (MVBs) formation and sorting of endosomal cargo proteins into MVBs. MVBs contain intraluminal vesicles (ILVs) that are generated by invagination and scission from the limiting membrane of the endosome and mostly are delivered to lysosomes enabling degradation of membrane proteins, such as stimulated growth factor receptors, lysosomal enzymes and lipids. The MVB pathway appears to require the sequential function of ESCRT-O, -I,-II and -III complexes. ESCRT-III proteins mostly dissociate from the invaginating membrane before the ILV is released. The ESCRT machinery also functions in topologically equivalent membrane fission events, such as the terminal stages of cytokinesis. Together with SPAST, the ESCRT-III complex promotes nuclear envelope sealing and mitotic spindle disassembly during late anaphase. Recruited to the reforming nuclear envelope (NE) during anaphase by LEMD2 (By similarity). ESCRT-III proteins are believed to mediate the necessary vesicle extrusion and/or membrane fission activities, possibly in conjunction with the AAA ATPase VPS4.</text>
</comment>
<comment type="subunit">
    <text evidence="1">Probable core component of the endosomal sorting required for transport complex III (ESCRT-III). ESCRT-III components are thought to multimerize to form a flat lattice on the perimeter membrane of the endosome. Several assembly forms of ESCRT-III may exist that interact and act sequentially. In vitro, heteromerizes with CHMP3 (but not CHMP4) to form helical tubular structures that expose membrane-interacting sites on the outside whereas VPS4B can associate on the inside of the tubule. Interacts with CHMP1B, CHMP2B, CHMP3, CHMP4A, CHMP4B, CHMP4C and CHMP5. Interacts with VPS4A; the interaction is direct. Interacts with VPS4B; the interaction is direct. Interacts with MITD1. Interacts with VTA1; the interaction probably involves the open conformation of CHMP2A (By similarity).</text>
</comment>
<comment type="subcellular location">
    <subcellularLocation>
        <location evidence="2">Late endosome membrane</location>
        <topology evidence="2">Peripheral membrane protein</topology>
        <orientation evidence="2">Cytoplasmic side</orientation>
    </subcellularLocation>
    <subcellularLocation>
        <location evidence="5">Cytoplasm</location>
    </subcellularLocation>
    <subcellularLocation>
        <location evidence="2">Nucleus envelope</location>
    </subcellularLocation>
    <text evidence="2">Localizes to the midbody of dividing cells. Localized in two distinct rings on either side of the Fleming body. Localizes to the reforming nuclear envelope on chromatin disks during late anaphase (By similarity).</text>
</comment>
<comment type="tissue specificity">
    <text evidence="5">Widely expressed. Highly expressed in brain, heart, liver and kidney.</text>
</comment>
<comment type="domain">
    <text>The acidic C-terminus and the basic N-termminus are thought to render the protein in a closed, soluble and inactive conformation through an autoinhibitory intramolecular interaction. The open and active conformation, which enables membrane binding and oligomerization, is achieved by interaction with other cellular binding partners, probably including other ESCRT components.</text>
</comment>
<comment type="PTM">
    <text evidence="1">ISGylated in a CHMP5-dependent manner. Isgylation weakens and inhibits its interactions with VPS4A and VTA1 respectively (By similarity).</text>
</comment>
<comment type="similarity">
    <text evidence="6">Belongs to the SNF7 family.</text>
</comment>
<feature type="chain" id="PRO_0000211463" description="Charged multivesicular body protein 2a">
    <location>
        <begin position="1"/>
        <end position="222"/>
    </location>
</feature>
<feature type="region of interest" description="Interaction with VPS4B" evidence="1">
    <location>
        <begin position="56"/>
        <end position="222"/>
    </location>
</feature>
<feature type="region of interest" description="Disordered" evidence="4">
    <location>
        <begin position="179"/>
        <end position="198"/>
    </location>
</feature>
<feature type="region of interest" description="Interaction with VTA1" evidence="1">
    <location>
        <begin position="217"/>
        <end position="222"/>
    </location>
</feature>
<feature type="coiled-coil region" evidence="3">
    <location>
        <begin position="12"/>
        <end position="53"/>
    </location>
</feature>
<feature type="coiled-coil region" evidence="3">
    <location>
        <begin position="195"/>
        <end position="222"/>
    </location>
</feature>
<feature type="short sequence motif" description="MIT-interacting motif">
    <location>
        <begin position="210"/>
        <end position="220"/>
    </location>
</feature>
<feature type="compositionally biased region" description="Polar residues" evidence="4">
    <location>
        <begin position="179"/>
        <end position="188"/>
    </location>
</feature>
<feature type="modified residue" description="N-acetylmethionine" evidence="2">
    <location>
        <position position="1"/>
    </location>
</feature>
<feature type="modified residue" description="Phosphoserine" evidence="2">
    <location>
        <position position="184"/>
    </location>
</feature>
<feature type="modified residue" description="Phosphothreonine" evidence="2">
    <location>
        <position position="185"/>
    </location>
</feature>
<feature type="modified residue" description="Phosphoserine" evidence="2">
    <location>
        <position position="188"/>
    </location>
</feature>
<feature type="modified residue" description="Phosphoserine" evidence="2">
    <location>
        <position position="190"/>
    </location>
</feature>
<feature type="modified residue" description="Phosphoserine" evidence="2">
    <location>
        <position position="203"/>
    </location>
</feature>
<proteinExistence type="evidence at protein level"/>
<reference key="1">
    <citation type="journal article" date="2004" name="J. Cell Sci.">
        <title>Mammalian class E Vps proteins, SBP1 and mVps2/CHMP2A, interact with and regulate the function of an AAA-ATPase SKD1/Vps4B.</title>
        <authorList>
            <person name="Fujita H."/>
            <person name="Umezuki Y."/>
            <person name="Imamura K."/>
            <person name="Ishikawa D."/>
            <person name="Uchimura S."/>
            <person name="Nara A."/>
            <person name="Yoshimori T."/>
            <person name="Hayashizaki Y."/>
            <person name="Kawai J."/>
            <person name="Ishidoh K."/>
            <person name="Tanaka Y."/>
            <person name="Himeno M."/>
        </authorList>
    </citation>
    <scope>NUCLEOTIDE SEQUENCE [MRNA]</scope>
    <scope>SUBCELLULAR LOCATION</scope>
    <scope>TISSUE SPECIFICITY</scope>
    <scope>INTERACTION WITH VPS4B</scope>
</reference>
<reference key="2">
    <citation type="journal article" date="2005" name="Science">
        <title>The transcriptional landscape of the mammalian genome.</title>
        <authorList>
            <person name="Carninci P."/>
            <person name="Kasukawa T."/>
            <person name="Katayama S."/>
            <person name="Gough J."/>
            <person name="Frith M.C."/>
            <person name="Maeda N."/>
            <person name="Oyama R."/>
            <person name="Ravasi T."/>
            <person name="Lenhard B."/>
            <person name="Wells C."/>
            <person name="Kodzius R."/>
            <person name="Shimokawa K."/>
            <person name="Bajic V.B."/>
            <person name="Brenner S.E."/>
            <person name="Batalov S."/>
            <person name="Forrest A.R."/>
            <person name="Zavolan M."/>
            <person name="Davis M.J."/>
            <person name="Wilming L.G."/>
            <person name="Aidinis V."/>
            <person name="Allen J.E."/>
            <person name="Ambesi-Impiombato A."/>
            <person name="Apweiler R."/>
            <person name="Aturaliya R.N."/>
            <person name="Bailey T.L."/>
            <person name="Bansal M."/>
            <person name="Baxter L."/>
            <person name="Beisel K.W."/>
            <person name="Bersano T."/>
            <person name="Bono H."/>
            <person name="Chalk A.M."/>
            <person name="Chiu K.P."/>
            <person name="Choudhary V."/>
            <person name="Christoffels A."/>
            <person name="Clutterbuck D.R."/>
            <person name="Crowe M.L."/>
            <person name="Dalla E."/>
            <person name="Dalrymple B.P."/>
            <person name="de Bono B."/>
            <person name="Della Gatta G."/>
            <person name="di Bernardo D."/>
            <person name="Down T."/>
            <person name="Engstrom P."/>
            <person name="Fagiolini M."/>
            <person name="Faulkner G."/>
            <person name="Fletcher C.F."/>
            <person name="Fukushima T."/>
            <person name="Furuno M."/>
            <person name="Futaki S."/>
            <person name="Gariboldi M."/>
            <person name="Georgii-Hemming P."/>
            <person name="Gingeras T.R."/>
            <person name="Gojobori T."/>
            <person name="Green R.E."/>
            <person name="Gustincich S."/>
            <person name="Harbers M."/>
            <person name="Hayashi Y."/>
            <person name="Hensch T.K."/>
            <person name="Hirokawa N."/>
            <person name="Hill D."/>
            <person name="Huminiecki L."/>
            <person name="Iacono M."/>
            <person name="Ikeo K."/>
            <person name="Iwama A."/>
            <person name="Ishikawa T."/>
            <person name="Jakt M."/>
            <person name="Kanapin A."/>
            <person name="Katoh M."/>
            <person name="Kawasawa Y."/>
            <person name="Kelso J."/>
            <person name="Kitamura H."/>
            <person name="Kitano H."/>
            <person name="Kollias G."/>
            <person name="Krishnan S.P."/>
            <person name="Kruger A."/>
            <person name="Kummerfeld S.K."/>
            <person name="Kurochkin I.V."/>
            <person name="Lareau L.F."/>
            <person name="Lazarevic D."/>
            <person name="Lipovich L."/>
            <person name="Liu J."/>
            <person name="Liuni S."/>
            <person name="McWilliam S."/>
            <person name="Madan Babu M."/>
            <person name="Madera M."/>
            <person name="Marchionni L."/>
            <person name="Matsuda H."/>
            <person name="Matsuzawa S."/>
            <person name="Miki H."/>
            <person name="Mignone F."/>
            <person name="Miyake S."/>
            <person name="Morris K."/>
            <person name="Mottagui-Tabar S."/>
            <person name="Mulder N."/>
            <person name="Nakano N."/>
            <person name="Nakauchi H."/>
            <person name="Ng P."/>
            <person name="Nilsson R."/>
            <person name="Nishiguchi S."/>
            <person name="Nishikawa S."/>
            <person name="Nori F."/>
            <person name="Ohara O."/>
            <person name="Okazaki Y."/>
            <person name="Orlando V."/>
            <person name="Pang K.C."/>
            <person name="Pavan W.J."/>
            <person name="Pavesi G."/>
            <person name="Pesole G."/>
            <person name="Petrovsky N."/>
            <person name="Piazza S."/>
            <person name="Reed J."/>
            <person name="Reid J.F."/>
            <person name="Ring B.Z."/>
            <person name="Ringwald M."/>
            <person name="Rost B."/>
            <person name="Ruan Y."/>
            <person name="Salzberg S.L."/>
            <person name="Sandelin A."/>
            <person name="Schneider C."/>
            <person name="Schoenbach C."/>
            <person name="Sekiguchi K."/>
            <person name="Semple C.A."/>
            <person name="Seno S."/>
            <person name="Sessa L."/>
            <person name="Sheng Y."/>
            <person name="Shibata Y."/>
            <person name="Shimada H."/>
            <person name="Shimada K."/>
            <person name="Silva D."/>
            <person name="Sinclair B."/>
            <person name="Sperling S."/>
            <person name="Stupka E."/>
            <person name="Sugiura K."/>
            <person name="Sultana R."/>
            <person name="Takenaka Y."/>
            <person name="Taki K."/>
            <person name="Tammoja K."/>
            <person name="Tan S.L."/>
            <person name="Tang S."/>
            <person name="Taylor M.S."/>
            <person name="Tegner J."/>
            <person name="Teichmann S.A."/>
            <person name="Ueda H.R."/>
            <person name="van Nimwegen E."/>
            <person name="Verardo R."/>
            <person name="Wei C.L."/>
            <person name="Yagi K."/>
            <person name="Yamanishi H."/>
            <person name="Zabarovsky E."/>
            <person name="Zhu S."/>
            <person name="Zimmer A."/>
            <person name="Hide W."/>
            <person name="Bult C."/>
            <person name="Grimmond S.M."/>
            <person name="Teasdale R.D."/>
            <person name="Liu E.T."/>
            <person name="Brusic V."/>
            <person name="Quackenbush J."/>
            <person name="Wahlestedt C."/>
            <person name="Mattick J.S."/>
            <person name="Hume D.A."/>
            <person name="Kai C."/>
            <person name="Sasaki D."/>
            <person name="Tomaru Y."/>
            <person name="Fukuda S."/>
            <person name="Kanamori-Katayama M."/>
            <person name="Suzuki M."/>
            <person name="Aoki J."/>
            <person name="Arakawa T."/>
            <person name="Iida J."/>
            <person name="Imamura K."/>
            <person name="Itoh M."/>
            <person name="Kato T."/>
            <person name="Kawaji H."/>
            <person name="Kawagashira N."/>
            <person name="Kawashima T."/>
            <person name="Kojima M."/>
            <person name="Kondo S."/>
            <person name="Konno H."/>
            <person name="Nakano K."/>
            <person name="Ninomiya N."/>
            <person name="Nishio T."/>
            <person name="Okada M."/>
            <person name="Plessy C."/>
            <person name="Shibata K."/>
            <person name="Shiraki T."/>
            <person name="Suzuki S."/>
            <person name="Tagami M."/>
            <person name="Waki K."/>
            <person name="Watahiki A."/>
            <person name="Okamura-Oho Y."/>
            <person name="Suzuki H."/>
            <person name="Kawai J."/>
            <person name="Hayashizaki Y."/>
        </authorList>
    </citation>
    <scope>NUCLEOTIDE SEQUENCE [LARGE SCALE MRNA]</scope>
    <source>
        <strain>C57BL/6J</strain>
        <tissue>Cerebellum</tissue>
    </source>
</reference>
<reference key="3">
    <citation type="journal article" date="2004" name="Genome Res.">
        <title>The status, quality, and expansion of the NIH full-length cDNA project: the Mammalian Gene Collection (MGC).</title>
        <authorList>
            <consortium name="The MGC Project Team"/>
        </authorList>
    </citation>
    <scope>NUCLEOTIDE SEQUENCE [LARGE SCALE MRNA]</scope>
    <source>
        <strain>FVB/N</strain>
        <tissue>Mammary tumor</tissue>
    </source>
</reference>
<reference key="4">
    <citation type="journal article" date="2006" name="Mol. Cell. Proteomics">
        <title>Comprehensive identification of phosphorylation sites in postsynaptic density preparations.</title>
        <authorList>
            <person name="Trinidad J.C."/>
            <person name="Specht C.G."/>
            <person name="Thalhammer A."/>
            <person name="Schoepfer R."/>
            <person name="Burlingame A.L."/>
        </authorList>
    </citation>
    <scope>IDENTIFICATION BY MASS SPECTROMETRY [LARGE SCALE ANALYSIS]</scope>
    <source>
        <tissue>Brain</tissue>
    </source>
</reference>
<reference key="5">
    <citation type="journal article" date="2010" name="Cell">
        <title>A tissue-specific atlas of mouse protein phosphorylation and expression.</title>
        <authorList>
            <person name="Huttlin E.L."/>
            <person name="Jedrychowski M.P."/>
            <person name="Elias J.E."/>
            <person name="Goswami T."/>
            <person name="Rad R."/>
            <person name="Beausoleil S.A."/>
            <person name="Villen J."/>
            <person name="Haas W."/>
            <person name="Sowa M.E."/>
            <person name="Gygi S.P."/>
        </authorList>
    </citation>
    <scope>IDENTIFICATION BY MASS SPECTROMETRY [LARGE SCALE ANALYSIS]</scope>
    <source>
        <tissue>Brain</tissue>
        <tissue>Liver</tissue>
        <tissue>Lung</tissue>
        <tissue>Spleen</tissue>
        <tissue>Testis</tissue>
    </source>
</reference>